<gene>
    <name type="primary">GLG5</name>
    <name type="synonym">LIP6</name>
</gene>
<evidence type="ECO:0000250" key="1">
    <source>
        <dbReference type="UniProtKB" id="P06181"/>
    </source>
</evidence>
<evidence type="ECO:0000255" key="2"/>
<evidence type="ECO:0000255" key="3">
    <source>
        <dbReference type="PROSITE-ProRule" id="PRU00297"/>
    </source>
</evidence>
<evidence type="ECO:0000255" key="4">
    <source>
        <dbReference type="PROSITE-ProRule" id="PRU10012"/>
    </source>
</evidence>
<evidence type="ECO:0000256" key="5">
    <source>
        <dbReference type="SAM" id="MobiDB-lite"/>
    </source>
</evidence>
<evidence type="ECO:0000305" key="6"/>
<organism>
    <name type="scientific">Phanerodontia chrysosporium</name>
    <name type="common">White-rot fungus</name>
    <name type="synonym">Sporotrichum pruinosum</name>
    <dbReference type="NCBI Taxonomy" id="2822231"/>
    <lineage>
        <taxon>Eukaryota</taxon>
        <taxon>Fungi</taxon>
        <taxon>Dikarya</taxon>
        <taxon>Basidiomycota</taxon>
        <taxon>Agaricomycotina</taxon>
        <taxon>Agaricomycetes</taxon>
        <taxon>Polyporales</taxon>
        <taxon>Phanerochaetaceae</taxon>
        <taxon>Phanerodontia</taxon>
    </lineage>
</organism>
<comment type="function">
    <text evidence="1">Depolymerization of lignin. Catalyzes the C(alpha)-C(beta) cleavage of the propyl side chains of lignin.</text>
</comment>
<comment type="catalytic activity">
    <reaction evidence="1">
        <text>1-(3,4-dimethoxyphenyl)-2-(2-methoxyphenoxy)propane-1,3-diol + H2O2 = 3,4-dimethoxybenzaldehyde + guaiacol + glycolaldehyde + H2O</text>
        <dbReference type="Rhea" id="RHEA:48004"/>
        <dbReference type="ChEBI" id="CHEBI:15377"/>
        <dbReference type="ChEBI" id="CHEBI:16240"/>
        <dbReference type="ChEBI" id="CHEBI:17071"/>
        <dbReference type="ChEBI" id="CHEBI:17098"/>
        <dbReference type="ChEBI" id="CHEBI:28591"/>
        <dbReference type="ChEBI" id="CHEBI:86963"/>
        <dbReference type="EC" id="1.11.1.14"/>
    </reaction>
</comment>
<comment type="catalytic activity">
    <reaction evidence="1">
        <text>2 (3,4-dimethoxyphenyl)methanol + H2O2 = 2 (3,4-dimethoxyphenyl)methanol radical + 2 H2O</text>
        <dbReference type="Rhea" id="RHEA:30271"/>
        <dbReference type="ChEBI" id="CHEBI:15377"/>
        <dbReference type="ChEBI" id="CHEBI:16240"/>
        <dbReference type="ChEBI" id="CHEBI:62150"/>
        <dbReference type="ChEBI" id="CHEBI:88143"/>
        <dbReference type="EC" id="1.11.1.14"/>
    </reaction>
</comment>
<comment type="cofactor">
    <cofactor evidence="3">
        <name>Ca(2+)</name>
        <dbReference type="ChEBI" id="CHEBI:29108"/>
    </cofactor>
    <text evidence="3">Binds 2 calcium ions per subunit.</text>
</comment>
<comment type="cofactor">
    <cofactor evidence="1">
        <name>heme b</name>
        <dbReference type="ChEBI" id="CHEBI:60344"/>
    </cofactor>
    <text evidence="1">Binds 1 heme b (iron(II)-protoporphyrin IX) group per subunit.</text>
</comment>
<comment type="pathway">
    <text>Secondary metabolite metabolism; lignin degradation.</text>
</comment>
<comment type="similarity">
    <text evidence="6">Belongs to the peroxidase family. Ligninase subfamily.</text>
</comment>
<feature type="signal peptide" evidence="2">
    <location>
        <begin position="1"/>
        <end position="21"/>
    </location>
</feature>
<feature type="propeptide" id="PRO_0000023768" evidence="2">
    <location>
        <begin position="22"/>
        <end position="27"/>
    </location>
</feature>
<feature type="chain" id="PRO_0000023769" description="Ligninase LG5">
    <location>
        <begin position="28"/>
        <end position="371"/>
    </location>
</feature>
<feature type="region of interest" description="Disordered" evidence="5">
    <location>
        <begin position="349"/>
        <end position="371"/>
    </location>
</feature>
<feature type="active site" description="Proton acceptor" evidence="3 4">
    <location>
        <position position="74"/>
    </location>
</feature>
<feature type="binding site" evidence="3">
    <location>
        <position position="75"/>
    </location>
    <ligand>
        <name>Ca(2+)</name>
        <dbReference type="ChEBI" id="CHEBI:29108"/>
        <label>1</label>
    </ligand>
</feature>
<feature type="binding site" evidence="3">
    <location>
        <position position="92"/>
    </location>
    <ligand>
        <name>Ca(2+)</name>
        <dbReference type="ChEBI" id="CHEBI:29108"/>
        <label>1</label>
    </ligand>
</feature>
<feature type="binding site" evidence="3">
    <location>
        <position position="94"/>
    </location>
    <ligand>
        <name>Ca(2+)</name>
        <dbReference type="ChEBI" id="CHEBI:29108"/>
        <label>1</label>
    </ligand>
</feature>
<feature type="binding site" evidence="3">
    <location>
        <position position="96"/>
    </location>
    <ligand>
        <name>Ca(2+)</name>
        <dbReference type="ChEBI" id="CHEBI:29108"/>
        <label>1</label>
    </ligand>
</feature>
<feature type="binding site" description="axial binding residue" evidence="3">
    <location>
        <position position="202"/>
    </location>
    <ligand>
        <name>heme b</name>
        <dbReference type="ChEBI" id="CHEBI:60344"/>
    </ligand>
    <ligandPart>
        <name>Fe</name>
        <dbReference type="ChEBI" id="CHEBI:18248"/>
    </ligandPart>
</feature>
<feature type="binding site" evidence="3">
    <location>
        <position position="203"/>
    </location>
    <ligand>
        <name>Ca(2+)</name>
        <dbReference type="ChEBI" id="CHEBI:29108"/>
        <label>2</label>
    </ligand>
</feature>
<feature type="binding site" evidence="3">
    <location>
        <position position="220"/>
    </location>
    <ligand>
        <name>Ca(2+)</name>
        <dbReference type="ChEBI" id="CHEBI:29108"/>
        <label>2</label>
    </ligand>
</feature>
<feature type="binding site" evidence="3">
    <location>
        <position position="222"/>
    </location>
    <ligand>
        <name>Ca(2+)</name>
        <dbReference type="ChEBI" id="CHEBI:29108"/>
        <label>2</label>
    </ligand>
</feature>
<feature type="binding site" evidence="3">
    <location>
        <position position="225"/>
    </location>
    <ligand>
        <name>Ca(2+)</name>
        <dbReference type="ChEBI" id="CHEBI:29108"/>
        <label>2</label>
    </ligand>
</feature>
<feature type="binding site" evidence="3">
    <location>
        <position position="227"/>
    </location>
    <ligand>
        <name>Ca(2+)</name>
        <dbReference type="ChEBI" id="CHEBI:29108"/>
        <label>2</label>
    </ligand>
</feature>
<feature type="site" description="Transition state stabilizer" evidence="3">
    <location>
        <position position="70"/>
    </location>
</feature>
<feature type="glycosylation site" description="N-linked (GlcNAc...) asparagine" evidence="2">
    <location>
        <position position="283"/>
    </location>
</feature>
<feature type="disulfide bond" evidence="3">
    <location>
        <begin position="30"/>
        <end position="42"/>
    </location>
</feature>
<feature type="disulfide bond" evidence="3">
    <location>
        <begin position="41"/>
        <end position="311"/>
    </location>
</feature>
<feature type="disulfide bond" evidence="3">
    <location>
        <begin position="61"/>
        <end position="146"/>
    </location>
</feature>
<feature type="disulfide bond" evidence="3">
    <location>
        <begin position="275"/>
        <end position="344"/>
    </location>
</feature>
<sequence>MAFKKLLAVLTAALSLRAAQGAAVEKRATCSNGKVVPAASCCTWFNVLSDIQENLFNGGQCGAEAHESIRLVFHDAIAISPAMEPQASSVRGADGSIMIFDEIETNFHPNIGLDEIVRLQKPFVQKHGVTPGDFIAFAGAVALSNCPGAPQMNFFTGRAPATQPAPDGLVPEPFHSVDQIIDRVFDAGEFDELELVWMLSAHSVAAANDIDPNIQGLPFDSTPGIFDSQFFVETQLAGTGFTGGSNNQGEVSSPLPGEMRLQSDFLIARDARTACEWQSFVNNQSKLVSDFQFIFLALTQLGQDPDAMTDCSAVIPISKPAPNNTPGFSFFPPGMTMDDVEQACAETPFPTLSTLPGPATSVARIPPPPGA</sequence>
<keyword id="KW-0106">Calcium</keyword>
<keyword id="KW-0165">Cleavage on pair of basic residues</keyword>
<keyword id="KW-1015">Disulfide bond</keyword>
<keyword id="KW-0325">Glycoprotein</keyword>
<keyword id="KW-0349">Heme</keyword>
<keyword id="KW-0376">Hydrogen peroxide</keyword>
<keyword id="KW-0408">Iron</keyword>
<keyword id="KW-0439">Lignin degradation</keyword>
<keyword id="KW-0479">Metal-binding</keyword>
<keyword id="KW-0560">Oxidoreductase</keyword>
<keyword id="KW-0575">Peroxidase</keyword>
<keyword id="KW-0732">Signal</keyword>
<keyword id="KW-0865">Zymogen</keyword>
<name>LIG5_PHACH</name>
<protein>
    <recommendedName>
        <fullName>Ligninase LG5</fullName>
        <ecNumber evidence="1">1.11.1.14</ecNumber>
    </recommendedName>
    <alternativeName>
        <fullName>Diarylpropane peroxidase</fullName>
    </alternativeName>
    <alternativeName>
        <fullName>Lignin peroxidase</fullName>
    </alternativeName>
</protein>
<dbReference type="EC" id="1.11.1.14" evidence="1"/>
<dbReference type="EMBL" id="M18794">
    <property type="protein sequence ID" value="AAA33734.1"/>
    <property type="molecule type" value="mRNA"/>
</dbReference>
<dbReference type="EMBL" id="X55343">
    <property type="protein sequence ID" value="CAA39033.1"/>
    <property type="molecule type" value="Genomic_DNA"/>
</dbReference>
<dbReference type="EMBL" id="M63496">
    <property type="protein sequence ID" value="AAA33739.1"/>
    <property type="molecule type" value="Genomic_DNA"/>
</dbReference>
<dbReference type="PIR" id="JN0117">
    <property type="entry name" value="OPJGG5"/>
</dbReference>
<dbReference type="SMR" id="P11543"/>
<dbReference type="CAZy" id="AA2">
    <property type="family name" value="Auxiliary Activities 2"/>
</dbReference>
<dbReference type="PeroxiBase" id="2411">
    <property type="entry name" value="PcLiP03_BKMF1767"/>
</dbReference>
<dbReference type="GlyCosmos" id="P11543">
    <property type="glycosylation" value="1 site, No reported glycans"/>
</dbReference>
<dbReference type="VEuPathDB" id="FungiDB:AGR57_14174"/>
<dbReference type="BioCyc" id="MetaCyc:MONOMER-14339"/>
<dbReference type="BRENDA" id="1.11.1.14">
    <property type="organism ID" value="1380"/>
</dbReference>
<dbReference type="UniPathway" id="UPA00892"/>
<dbReference type="GO" id="GO:0016690">
    <property type="term" value="F:diarylpropane peroxidase activity"/>
    <property type="evidence" value="ECO:0007669"/>
    <property type="project" value="UniProtKB-EC"/>
</dbReference>
<dbReference type="GO" id="GO:0020037">
    <property type="term" value="F:heme binding"/>
    <property type="evidence" value="ECO:0007669"/>
    <property type="project" value="InterPro"/>
</dbReference>
<dbReference type="GO" id="GO:0046872">
    <property type="term" value="F:metal ion binding"/>
    <property type="evidence" value="ECO:0007669"/>
    <property type="project" value="UniProtKB-KW"/>
</dbReference>
<dbReference type="GO" id="GO:0034599">
    <property type="term" value="P:cellular response to oxidative stress"/>
    <property type="evidence" value="ECO:0007669"/>
    <property type="project" value="InterPro"/>
</dbReference>
<dbReference type="GO" id="GO:0042744">
    <property type="term" value="P:hydrogen peroxide catabolic process"/>
    <property type="evidence" value="ECO:0007669"/>
    <property type="project" value="UniProtKB-KW"/>
</dbReference>
<dbReference type="GO" id="GO:0046274">
    <property type="term" value="P:lignin catabolic process"/>
    <property type="evidence" value="ECO:0007669"/>
    <property type="project" value="UniProtKB-UniPathway"/>
</dbReference>
<dbReference type="GO" id="GO:0000302">
    <property type="term" value="P:response to reactive oxygen species"/>
    <property type="evidence" value="ECO:0007669"/>
    <property type="project" value="TreeGrafter"/>
</dbReference>
<dbReference type="CDD" id="cd00692">
    <property type="entry name" value="ligninase"/>
    <property type="match status" value="1"/>
</dbReference>
<dbReference type="Gene3D" id="1.10.520.10">
    <property type="match status" value="1"/>
</dbReference>
<dbReference type="Gene3D" id="1.10.420.10">
    <property type="entry name" value="Peroxidase, domain 2"/>
    <property type="match status" value="1"/>
</dbReference>
<dbReference type="InterPro" id="IPR044831">
    <property type="entry name" value="Ccp1-like"/>
</dbReference>
<dbReference type="InterPro" id="IPR002016">
    <property type="entry name" value="Haem_peroxidase"/>
</dbReference>
<dbReference type="InterPro" id="IPR010255">
    <property type="entry name" value="Haem_peroxidase_sf"/>
</dbReference>
<dbReference type="InterPro" id="IPR001621">
    <property type="entry name" value="Ligninase"/>
</dbReference>
<dbReference type="InterPro" id="IPR024589">
    <property type="entry name" value="Ligninase_C"/>
</dbReference>
<dbReference type="InterPro" id="IPR019794">
    <property type="entry name" value="Peroxidases_AS"/>
</dbReference>
<dbReference type="InterPro" id="IPR019793">
    <property type="entry name" value="Peroxidases_heam-ligand_BS"/>
</dbReference>
<dbReference type="PANTHER" id="PTHR31356:SF66">
    <property type="entry name" value="CATALASE-PEROXIDASE"/>
    <property type="match status" value="1"/>
</dbReference>
<dbReference type="PANTHER" id="PTHR31356">
    <property type="entry name" value="THYLAKOID LUMENAL 29 KDA PROTEIN, CHLOROPLASTIC-RELATED"/>
    <property type="match status" value="1"/>
</dbReference>
<dbReference type="Pfam" id="PF00141">
    <property type="entry name" value="peroxidase"/>
    <property type="match status" value="1"/>
</dbReference>
<dbReference type="Pfam" id="PF11895">
    <property type="entry name" value="Peroxidase_ext"/>
    <property type="match status" value="1"/>
</dbReference>
<dbReference type="PRINTS" id="PR00462">
    <property type="entry name" value="LIGNINASE"/>
</dbReference>
<dbReference type="PRINTS" id="PR00458">
    <property type="entry name" value="PEROXIDASE"/>
</dbReference>
<dbReference type="SUPFAM" id="SSF48113">
    <property type="entry name" value="Heme-dependent peroxidases"/>
    <property type="match status" value="1"/>
</dbReference>
<dbReference type="PROSITE" id="PS00435">
    <property type="entry name" value="PEROXIDASE_1"/>
    <property type="match status" value="1"/>
</dbReference>
<dbReference type="PROSITE" id="PS00436">
    <property type="entry name" value="PEROXIDASE_2"/>
    <property type="match status" value="1"/>
</dbReference>
<dbReference type="PROSITE" id="PS50873">
    <property type="entry name" value="PEROXIDASE_4"/>
    <property type="match status" value="1"/>
</dbReference>
<proteinExistence type="evidence at transcript level"/>
<accession>P11543</accession>
<reference key="1">
    <citation type="journal article" date="1987" name="Gene">
        <title>Analysis of nucleotide sequences of two ligninase cDNAs from a white-rot filamentous fungus, Phanerochaete chrysosporium.</title>
        <authorList>
            <person name="de Boer H.A."/>
            <person name="Zhang Y.Z."/>
            <person name="Collins C."/>
            <person name="Reddy C.A."/>
        </authorList>
    </citation>
    <scope>NUCLEOTIDE SEQUENCE [MRNA]</scope>
</reference>
<reference key="2">
    <citation type="journal article" date="1991" name="Nucleic Acids Res.">
        <title>Genomic organization of lignin peroxidase genes of Phanerochaete chrysosporium.</title>
        <authorList>
            <person name="Gaskell J."/>
            <person name="Dieperink E."/>
            <person name="Cullen D."/>
        </authorList>
    </citation>
    <scope>NUCLEOTIDE SEQUENCE [GENOMIC DNA]</scope>
    <source>
        <strain>ATCC 24725 / DSM 6909 / CBS 481.73 / BCRC 36200 / NRRL 6361 / VKM F-1767</strain>
    </source>
</reference>
<reference key="3">
    <citation type="journal article" date="1991" name="Gene">
        <title>Cloning of several lignin peroxidase (LIP)-encoding genes: sequence analysis of the LIP6 gene from the white-rot basidiomycete, Phanerochaete chrysosporium.</title>
        <authorList>
            <person name="Zhang Y.Z."/>
            <person name="Reddy C.A."/>
            <person name="Rasooly A."/>
        </authorList>
    </citation>
    <scope>NUCLEOTIDE SEQUENCE [GENOMIC DNA]</scope>
    <source>
        <strain>ATCC 24725 / DSM 6909 / CBS 481.73 / BCRC 36200 / NRRL 6361 / VKM F-1767</strain>
    </source>
</reference>